<name>DEFLU_LUCSE</name>
<proteinExistence type="evidence at protein level"/>
<protein>
    <recommendedName>
        <fullName evidence="9 10">Defensin Lucifensin</fullName>
    </recommendedName>
    <alternativeName>
        <fullName evidence="9">Sericasin</fullName>
    </alternativeName>
</protein>
<reference key="1">
    <citation type="journal article" date="2010" name="J. Antimicrob. Chemother.">
        <title>A novel approach to the antimicrobial activity of maggot debridement therapy.</title>
        <authorList>
            <person name="Andersen A.S."/>
            <person name="Sandvang D."/>
            <person name="Schnorr K.M."/>
            <person name="Kruse T."/>
            <person name="Neve S."/>
            <person name="Joergensen B."/>
            <person name="Karlsmark T."/>
            <person name="Krogfelt K.A."/>
        </authorList>
    </citation>
    <scope>NUCLEOTIDE SEQUENCE [MRNA]</scope>
    <scope>FUNCTION</scope>
    <scope>MASS SPECTROMETRY</scope>
    <source>
        <tissue>Larva</tissue>
    </source>
</reference>
<reference key="2">
    <citation type="journal article" date="2010" name="Cell. Mol. Life Sci.">
        <title>Lucifensin, the long-sought antimicrobial factor of medicinal maggots of the blowfly Lucilia sericata.</title>
        <authorList>
            <person name="Cerovsky V."/>
            <person name="Zdarek J."/>
            <person name="Fucik V."/>
            <person name="Monincova L."/>
            <person name="Voburka Z."/>
            <person name="Bem R."/>
        </authorList>
    </citation>
    <scope>PROTEIN SEQUENCE OF 53-92</scope>
    <scope>FUNCTION</scope>
    <scope>SUBCELLULAR LOCATION</scope>
    <scope>TISSUE SPECIFICITY</scope>
    <scope>MASS SPECTROMETRY</scope>
    <source>
        <tissue>Larval gut</tissue>
    </source>
</reference>
<reference key="3">
    <citation type="journal article" date="2010" name="Science">
        <title>Plectasin, a fungal defensin, targets the bacterial cell wall precursor Lipid II.</title>
        <authorList>
            <person name="Schneider T."/>
            <person name="Kruse T."/>
            <person name="Wimmer R."/>
            <person name="Wiedemann I."/>
            <person name="Sass V."/>
            <person name="Pag U."/>
            <person name="Jansen A."/>
            <person name="Nielsen A.K."/>
            <person name="Mygind P.H."/>
            <person name="Raventos D.S."/>
            <person name="Neve S."/>
            <person name="Ravn B."/>
            <person name="Bonvin A.M."/>
            <person name="De Maria L."/>
            <person name="Andersen A.S."/>
            <person name="Gammelgaard L.K."/>
            <person name="Sahl H.G."/>
            <person name="Kristensen H.H."/>
        </authorList>
    </citation>
    <scope>FUNCTION</scope>
    <scope>BINDING TO LIPID II</scope>
</reference>
<reference key="4">
    <citation type="journal article" date="2011" name="ChemBioChem">
        <title>Lucifensin, a novel insect defensin of medicinal maggots: synthesis and structural study.</title>
        <authorList>
            <person name="Cerovsky V."/>
            <person name="Slaninova J."/>
            <person name="Fucik V."/>
            <person name="Monincova L."/>
            <person name="Bednarova L."/>
            <person name="Malon P."/>
            <person name="Stokrova J."/>
        </authorList>
    </citation>
    <scope>FUNCTION</scope>
    <scope>SYNTHESIS</scope>
    <scope>MASS SPECTROMETRY</scope>
    <scope>DISULFIDE BONDS</scope>
</reference>
<reference key="5">
    <citation type="journal article" date="2013" name="Cell Tissue Res.">
        <title>Expression of lucifensin in Lucilia sericata medicinal maggots in infected environments.</title>
        <authorList>
            <person name="Valachova I."/>
            <person name="Bohova J."/>
            <person name="Palosova Z."/>
            <person name="Takac P."/>
            <person name="Kozanek M."/>
            <person name="Majtan J."/>
        </authorList>
    </citation>
    <scope>TISSUE SPECIFICITY</scope>
    <scope>DEVELOPMENTAL STAGE</scope>
    <scope>INDUCTION</scope>
</reference>
<reference key="6">
    <citation type="journal article" date="2014" name="Asian Pac. J. Trop. Biomed.">
        <title>Antibacterial properties of lucifensin in Lucilia sericata maggots after septic injury.</title>
        <authorList>
            <person name="Valachova I."/>
            <person name="Prochazka E."/>
            <person name="Bohova J."/>
            <person name="Novak P."/>
            <person name="Takac P."/>
            <person name="Majtan J."/>
        </authorList>
    </citation>
    <scope>SUBCELLULAR LOCATION</scope>
    <scope>INDUCTION</scope>
    <scope>MASS SPECTROMETRY</scope>
</reference>
<reference evidence="13" key="7">
    <citation type="journal article" date="2012" name="J. Biomol. NMR">
        <title>The insect defensin lucifensin from Lucilia sericata.</title>
        <authorList>
            <person name="Nygaard M.K."/>
            <person name="Andersen A.S."/>
            <person name="Kristensen H.H."/>
            <person name="Krogfelt K.A."/>
            <person name="Fojan P."/>
            <person name="Wimmer R."/>
        </authorList>
    </citation>
    <scope>STRUCTURE BY NMR</scope>
    <scope>DISULFIDE BONDS</scope>
</reference>
<feature type="signal peptide" evidence="1">
    <location>
        <begin position="1"/>
        <end position="23"/>
    </location>
</feature>
<feature type="propeptide" id="PRO_0000445006" evidence="11">
    <location>
        <begin position="24"/>
        <end position="52"/>
    </location>
</feature>
<feature type="peptide" id="PRO_0000392967" description="Defensin Lucifensin" evidence="3">
    <location>
        <begin position="53"/>
        <end position="92"/>
    </location>
</feature>
<feature type="disulfide bond" evidence="2 5 6 13">
    <location>
        <begin position="55"/>
        <end position="82"/>
    </location>
</feature>
<feature type="disulfide bond" evidence="2 5 6 13">
    <location>
        <begin position="68"/>
        <end position="88"/>
    </location>
</feature>
<feature type="disulfide bond" evidence="2 5 6 13">
    <location>
        <begin position="72"/>
        <end position="90"/>
    </location>
</feature>
<feature type="helix" evidence="14">
    <location>
        <begin position="67"/>
        <end position="73"/>
    </location>
</feature>
<feature type="turn" evidence="14">
    <location>
        <begin position="74"/>
        <end position="76"/>
    </location>
</feature>
<feature type="strand" evidence="14">
    <location>
        <begin position="80"/>
        <end position="82"/>
    </location>
</feature>
<feature type="strand" evidence="14">
    <location>
        <begin position="86"/>
        <end position="90"/>
    </location>
</feature>
<evidence type="ECO:0000255" key="1"/>
<evidence type="ECO:0000255" key="2">
    <source>
        <dbReference type="PROSITE-ProRule" id="PRU00710"/>
    </source>
</evidence>
<evidence type="ECO:0000269" key="3">
    <source>
    </source>
</evidence>
<evidence type="ECO:0000269" key="4">
    <source>
    </source>
</evidence>
<evidence type="ECO:0000269" key="5">
    <source>
    </source>
</evidence>
<evidence type="ECO:0000269" key="6">
    <source>
    </source>
</evidence>
<evidence type="ECO:0000269" key="7">
    <source>
    </source>
</evidence>
<evidence type="ECO:0000269" key="8">
    <source>
    </source>
</evidence>
<evidence type="ECO:0000303" key="9">
    <source>
    </source>
</evidence>
<evidence type="ECO:0000303" key="10">
    <source>
    </source>
</evidence>
<evidence type="ECO:0000305" key="11"/>
<evidence type="ECO:0000305" key="12">
    <source>
    </source>
</evidence>
<evidence type="ECO:0007744" key="13">
    <source>
        <dbReference type="PDB" id="2LLD"/>
    </source>
</evidence>
<evidence type="ECO:0007829" key="14">
    <source>
        <dbReference type="PDB" id="2LLD"/>
    </source>
</evidence>
<accession>P86471</accession>
<accession>D9J139</accession>
<dbReference type="EMBL" id="HM243535">
    <property type="protein sequence ID" value="ADI87383.1"/>
    <property type="molecule type" value="mRNA"/>
</dbReference>
<dbReference type="RefSeq" id="XP_037827711.1">
    <property type="nucleotide sequence ID" value="XM_037971783.1"/>
</dbReference>
<dbReference type="PDB" id="2LLD">
    <property type="method" value="NMR"/>
    <property type="chains" value="A=53-92"/>
</dbReference>
<dbReference type="PDBsum" id="2LLD"/>
<dbReference type="BMRB" id="P86471"/>
<dbReference type="SMR" id="P86471"/>
<dbReference type="GeneID" id="119615795"/>
<dbReference type="OrthoDB" id="10038290at2759"/>
<dbReference type="EvolutionaryTrace" id="P86471"/>
<dbReference type="GO" id="GO:0005576">
    <property type="term" value="C:extracellular region"/>
    <property type="evidence" value="ECO:0000314"/>
    <property type="project" value="UniProtKB"/>
</dbReference>
<dbReference type="GO" id="GO:0005615">
    <property type="term" value="C:extracellular space"/>
    <property type="evidence" value="ECO:0007669"/>
    <property type="project" value="TreeGrafter"/>
</dbReference>
<dbReference type="GO" id="GO:0020002">
    <property type="term" value="C:host cell plasma membrane"/>
    <property type="evidence" value="ECO:0007669"/>
    <property type="project" value="UniProtKB-SubCell"/>
</dbReference>
<dbReference type="GO" id="GO:0016020">
    <property type="term" value="C:membrane"/>
    <property type="evidence" value="ECO:0007669"/>
    <property type="project" value="UniProtKB-KW"/>
</dbReference>
<dbReference type="GO" id="GO:0008289">
    <property type="term" value="F:lipid binding"/>
    <property type="evidence" value="ECO:0007669"/>
    <property type="project" value="UniProtKB-KW"/>
</dbReference>
<dbReference type="GO" id="GO:0050832">
    <property type="term" value="P:defense response to fungus"/>
    <property type="evidence" value="ECO:0007669"/>
    <property type="project" value="UniProtKB-KW"/>
</dbReference>
<dbReference type="GO" id="GO:0050830">
    <property type="term" value="P:defense response to Gram-positive bacterium"/>
    <property type="evidence" value="ECO:0000314"/>
    <property type="project" value="UniProtKB"/>
</dbReference>
<dbReference type="GO" id="GO:0006959">
    <property type="term" value="P:humoral immune response"/>
    <property type="evidence" value="ECO:0007669"/>
    <property type="project" value="TreeGrafter"/>
</dbReference>
<dbReference type="GO" id="GO:0045087">
    <property type="term" value="P:innate immune response"/>
    <property type="evidence" value="ECO:0007669"/>
    <property type="project" value="UniProtKB-KW"/>
</dbReference>
<dbReference type="GO" id="GO:0031640">
    <property type="term" value="P:killing of cells of another organism"/>
    <property type="evidence" value="ECO:0007669"/>
    <property type="project" value="UniProtKB-KW"/>
</dbReference>
<dbReference type="CDD" id="cd21806">
    <property type="entry name" value="DEFL_defensin-like"/>
    <property type="match status" value="1"/>
</dbReference>
<dbReference type="FunFam" id="3.30.30.10:FF:000005">
    <property type="entry name" value="Defensin"/>
    <property type="match status" value="1"/>
</dbReference>
<dbReference type="Gene3D" id="3.30.30.10">
    <property type="entry name" value="Knottin, scorpion toxin-like"/>
    <property type="match status" value="1"/>
</dbReference>
<dbReference type="InterPro" id="IPR001542">
    <property type="entry name" value="Defensin_invertebrate/fungal"/>
</dbReference>
<dbReference type="InterPro" id="IPR036574">
    <property type="entry name" value="Scorpion_toxin-like_sf"/>
</dbReference>
<dbReference type="PANTHER" id="PTHR13645">
    <property type="entry name" value="DEFENSIN"/>
    <property type="match status" value="1"/>
</dbReference>
<dbReference type="PANTHER" id="PTHR13645:SF0">
    <property type="entry name" value="DEFENSIN"/>
    <property type="match status" value="1"/>
</dbReference>
<dbReference type="Pfam" id="PF01097">
    <property type="entry name" value="Defensin_2"/>
    <property type="match status" value="1"/>
</dbReference>
<dbReference type="SUPFAM" id="SSF57095">
    <property type="entry name" value="Scorpion toxin-like"/>
    <property type="match status" value="1"/>
</dbReference>
<dbReference type="PROSITE" id="PS51378">
    <property type="entry name" value="INVERT_DEFENSINS"/>
    <property type="match status" value="1"/>
</dbReference>
<keyword id="KW-0002">3D-structure</keyword>
<keyword id="KW-0044">Antibiotic</keyword>
<keyword id="KW-0929">Antimicrobial</keyword>
<keyword id="KW-0211">Defensin</keyword>
<keyword id="KW-0903">Direct protein sequencing</keyword>
<keyword id="KW-1015">Disulfide bond</keyword>
<keyword id="KW-0295">Fungicide</keyword>
<keyword id="KW-1032">Host cell membrane</keyword>
<keyword id="KW-1043">Host membrane</keyword>
<keyword id="KW-0391">Immunity</keyword>
<keyword id="KW-0399">Innate immunity</keyword>
<keyword id="KW-0446">Lipid-binding</keyword>
<keyword id="KW-0472">Membrane</keyword>
<keyword id="KW-0964">Secreted</keyword>
<keyword id="KW-0732">Signal</keyword>
<organism>
    <name type="scientific">Lucilia sericata</name>
    <name type="common">Green bottle fly</name>
    <name type="synonym">Phaenicia sericata</name>
    <dbReference type="NCBI Taxonomy" id="13632"/>
    <lineage>
        <taxon>Eukaryota</taxon>
        <taxon>Metazoa</taxon>
        <taxon>Ecdysozoa</taxon>
        <taxon>Arthropoda</taxon>
        <taxon>Hexapoda</taxon>
        <taxon>Insecta</taxon>
        <taxon>Pterygota</taxon>
        <taxon>Neoptera</taxon>
        <taxon>Endopterygota</taxon>
        <taxon>Diptera</taxon>
        <taxon>Brachycera</taxon>
        <taxon>Muscomorpha</taxon>
        <taxon>Oestroidea</taxon>
        <taxon>Calliphoridae</taxon>
        <taxon>Luciliinae</taxon>
        <taxon>Lucilia</taxon>
    </lineage>
</organism>
<sequence length="92" mass="9996">MKFFMVFAVTFCLALSFVSQSLALPADDEAHFVDGLEALKTIEPELHGRYKRATCDLLSGTGVKHSACAAHCLLRGNRGGYCNGRAICVCRN</sequence>
<comment type="function">
    <text evidence="3 4 5 12">Shows strong antibacterial activity against numerous Gram-positive bacteria. It selectively inhibits peptidoglycan biosynthesis through complex formation with the cell wall precursor lipid II (1:1 molar ratio) thus inhibiting cell wall synthesis (PubMed:20508130). Shows antibacterial activity against the Gram-positive bacteria M.luteus, E.fecalis (MIC=32 mg/L), S.aureus (MIC=16 mg/L), S.carnosus (MIC=2 mg/L), S.pneumoniae (MIC=2 mg/L) and S.pyogenes (MIC=2 mg/L) and against a number of methicillin-resistant S.aureus and glycopeptide-intermediate S.aureus isolates (PubMed:19921400, PubMed:20542901, PubMed:21560219). Does not show antibacterial activity against Gram-negative bacteria or antifungal activity against C.utilis (PubMed:20542901). Shows slight antifungal activity against C.albicans (PubMed:21560219).</text>
</comment>
<comment type="subcellular location">
    <subcellularLocation>
        <location evidence="2 3 5 8">Secreted</location>
    </subcellularLocation>
    <subcellularLocation>
        <location evidence="12">Host cell membrane</location>
    </subcellularLocation>
</comment>
<comment type="tissue specificity">
    <text evidence="3 7">Larval fat body, hemolymph and salivary glands (at protein level) (PubMed:19921400). Expressed in the salivary glands of all larval stages (PubMed:23624615).</text>
</comment>
<comment type="developmental stage">
    <text evidence="7">In the salivary glands, there is no expression in early larval stages with expression beginning 5-6 hours after hatching (PubMed:23624615). Maximum expression is reached about 24 hours after hatching, remains strong during the second and third instars and declines at the end of the third instar before the wandering stage (PubMed:23624615). No expression is detected at the wandering stage (PubMed:23624615).</text>
</comment>
<comment type="induction">
    <text evidence="7 8">Induced in the hemolymph by septic injury caused by dorsolateral puncturing with a needle contaminated with lipopolysaccharide (LPS) solution (PubMed:25182719). Induced in the salivary glands by feeding (PubMed:23624615). Induced in the fat body and the grease coupler of the salivary glands in response to oral ingestion of S.aureus and P.aeruginosa (PubMed:23624615).</text>
</comment>
<comment type="PTM">
    <text evidence="5">The disulfide bonds are essential for antimicrobial activity.</text>
</comment>
<comment type="mass spectrometry" mass="4113.8784" method="Electrospray" evidence="4"/>
<comment type="mass spectrometry" mass="4113.6" method="Electrospray" evidence="3"/>
<comment type="mass spectrometry" mass="4113.5" method="Electrospray" evidence="5"/>
<comment type="mass spectrometry" mass="4114.895" method="Electrospray" evidence="8"/>
<comment type="miscellaneous">
    <text evidence="3">During maggot debridement therapy which involves the controlled application of cultured sterile larvae to an infected chronic non-healing wound, one of the key factors which protects larvae against the infectious wound environment and contributes to wound healing through its antimicrobial activity.</text>
</comment>
<comment type="similarity">
    <text evidence="2">Belongs to the invertebrate defensin family. Type 1 subfamily.</text>
</comment>